<evidence type="ECO:0000305" key="1"/>
<dbReference type="EMBL" id="BA000004">
    <property type="protein sequence ID" value="BAB04830.1"/>
    <property type="molecule type" value="Genomic_DNA"/>
</dbReference>
<dbReference type="PIR" id="G83788">
    <property type="entry name" value="G83788"/>
</dbReference>
<dbReference type="RefSeq" id="WP_010897281.1">
    <property type="nucleotide sequence ID" value="NC_002570.2"/>
</dbReference>
<dbReference type="SMR" id="Q9KDV0"/>
<dbReference type="STRING" id="272558.gene:10727005"/>
<dbReference type="GeneID" id="87596739"/>
<dbReference type="KEGG" id="bha:BH1111"/>
<dbReference type="eggNOG" id="COG0393">
    <property type="taxonomic scope" value="Bacteria"/>
</dbReference>
<dbReference type="HOGENOM" id="CLU_117144_3_2_9"/>
<dbReference type="OrthoDB" id="9796448at2"/>
<dbReference type="Proteomes" id="UP000001258">
    <property type="component" value="Chromosome"/>
</dbReference>
<dbReference type="Gene3D" id="3.30.110.70">
    <property type="entry name" value="Hypothetical protein apc22750. Chain B"/>
    <property type="match status" value="1"/>
</dbReference>
<dbReference type="HAMAP" id="MF_00338">
    <property type="entry name" value="UPF0145"/>
    <property type="match status" value="1"/>
</dbReference>
<dbReference type="InterPro" id="IPR035439">
    <property type="entry name" value="UPF0145_dom_sf"/>
</dbReference>
<dbReference type="InterPro" id="IPR002765">
    <property type="entry name" value="UPF0145_YbjQ-like"/>
</dbReference>
<dbReference type="PANTHER" id="PTHR34068">
    <property type="entry name" value="UPF0145 PROTEIN YBJQ"/>
    <property type="match status" value="1"/>
</dbReference>
<dbReference type="PANTHER" id="PTHR34068:SF1">
    <property type="entry name" value="UPF0145 PROTEIN YBJQ"/>
    <property type="match status" value="1"/>
</dbReference>
<dbReference type="Pfam" id="PF01906">
    <property type="entry name" value="YbjQ_1"/>
    <property type="match status" value="1"/>
</dbReference>
<dbReference type="SUPFAM" id="SSF117782">
    <property type="entry name" value="YbjQ-like"/>
    <property type="match status" value="1"/>
</dbReference>
<gene>
    <name type="ordered locus">BH1111</name>
</gene>
<name>Y1111_HALH5</name>
<organism>
    <name type="scientific">Halalkalibacterium halodurans (strain ATCC BAA-125 / DSM 18197 / FERM 7344 / JCM 9153 / C-125)</name>
    <name type="common">Bacillus halodurans</name>
    <dbReference type="NCBI Taxonomy" id="272558"/>
    <lineage>
        <taxon>Bacteria</taxon>
        <taxon>Bacillati</taxon>
        <taxon>Bacillota</taxon>
        <taxon>Bacilli</taxon>
        <taxon>Bacillales</taxon>
        <taxon>Bacillaceae</taxon>
        <taxon>Halalkalibacterium (ex Joshi et al. 2022)</taxon>
    </lineage>
</organism>
<sequence length="107" mass="11429">MISTTTHSVEGHEITDYVGIVNGEAIMGANVVRDFLAGISDVIGGRSAAYEDKLAEGRQIAVREMEDRAAQLGADAVVGVMLDFETLRDGMLMCVATGTAVKLRRRS</sequence>
<protein>
    <recommendedName>
        <fullName>UPF0145 protein BH1111</fullName>
    </recommendedName>
</protein>
<keyword id="KW-1185">Reference proteome</keyword>
<accession>Q9KDV0</accession>
<feature type="chain" id="PRO_0000138459" description="UPF0145 protein BH1111">
    <location>
        <begin position="1"/>
        <end position="107"/>
    </location>
</feature>
<comment type="similarity">
    <text evidence="1">Belongs to the UPF0145 family.</text>
</comment>
<proteinExistence type="inferred from homology"/>
<reference key="1">
    <citation type="journal article" date="2000" name="Nucleic Acids Res.">
        <title>Complete genome sequence of the alkaliphilic bacterium Bacillus halodurans and genomic sequence comparison with Bacillus subtilis.</title>
        <authorList>
            <person name="Takami H."/>
            <person name="Nakasone K."/>
            <person name="Takaki Y."/>
            <person name="Maeno G."/>
            <person name="Sasaki R."/>
            <person name="Masui N."/>
            <person name="Fuji F."/>
            <person name="Hirama C."/>
            <person name="Nakamura Y."/>
            <person name="Ogasawara N."/>
            <person name="Kuhara S."/>
            <person name="Horikoshi K."/>
        </authorList>
    </citation>
    <scope>NUCLEOTIDE SEQUENCE [LARGE SCALE GENOMIC DNA]</scope>
    <source>
        <strain>ATCC BAA-125 / DSM 18197 / FERM 7344 / JCM 9153 / C-125</strain>
    </source>
</reference>